<accession>A0LDA2</accession>
<name>ATPA_MAGMM</name>
<gene>
    <name evidence="1" type="primary">atpA</name>
    <name type="ordered locus">Mmc1_3460</name>
</gene>
<comment type="function">
    <text evidence="1">Produces ATP from ADP in the presence of a proton gradient across the membrane. The alpha chain is a regulatory subunit.</text>
</comment>
<comment type="catalytic activity">
    <reaction evidence="1">
        <text>ATP + H2O + 4 H(+)(in) = ADP + phosphate + 5 H(+)(out)</text>
        <dbReference type="Rhea" id="RHEA:57720"/>
        <dbReference type="ChEBI" id="CHEBI:15377"/>
        <dbReference type="ChEBI" id="CHEBI:15378"/>
        <dbReference type="ChEBI" id="CHEBI:30616"/>
        <dbReference type="ChEBI" id="CHEBI:43474"/>
        <dbReference type="ChEBI" id="CHEBI:456216"/>
        <dbReference type="EC" id="7.1.2.2"/>
    </reaction>
</comment>
<comment type="subunit">
    <text evidence="1">F-type ATPases have 2 components, CF(1) - the catalytic core - and CF(0) - the membrane proton channel. CF(1) has five subunits: alpha(3), beta(3), gamma(1), delta(1), epsilon(1). CF(0) has three main subunits: a(1), b(2) and c(9-12). The alpha and beta chains form an alternating ring which encloses part of the gamma chain. CF(1) is attached to CF(0) by a central stalk formed by the gamma and epsilon chains, while a peripheral stalk is formed by the delta and b chains.</text>
</comment>
<comment type="subcellular location">
    <subcellularLocation>
        <location evidence="1">Cell inner membrane</location>
        <topology evidence="1">Peripheral membrane protein</topology>
    </subcellularLocation>
</comment>
<comment type="similarity">
    <text evidence="1">Belongs to the ATPase alpha/beta chains family.</text>
</comment>
<protein>
    <recommendedName>
        <fullName evidence="1">ATP synthase subunit alpha</fullName>
        <ecNumber evidence="1">7.1.2.2</ecNumber>
    </recommendedName>
    <alternativeName>
        <fullName evidence="1">ATP synthase F1 sector subunit alpha</fullName>
    </alternativeName>
    <alternativeName>
        <fullName evidence="1">F-ATPase subunit alpha</fullName>
    </alternativeName>
</protein>
<keyword id="KW-0066">ATP synthesis</keyword>
<keyword id="KW-0067">ATP-binding</keyword>
<keyword id="KW-0997">Cell inner membrane</keyword>
<keyword id="KW-1003">Cell membrane</keyword>
<keyword id="KW-0139">CF(1)</keyword>
<keyword id="KW-0375">Hydrogen ion transport</keyword>
<keyword id="KW-0406">Ion transport</keyword>
<keyword id="KW-0472">Membrane</keyword>
<keyword id="KW-0547">Nucleotide-binding</keyword>
<keyword id="KW-1185">Reference proteome</keyword>
<keyword id="KW-1278">Translocase</keyword>
<keyword id="KW-0813">Transport</keyword>
<sequence>MQVSVAEISGILKKQIAEYGKEAEVSEVGEVIAVGDGIARAYGLDNVMAGEMVEFEDGTQGMALNLEEDNVGIVIFGEGLAIKEGTTVKRTGRIVDVPVGKGLLGRVTDGLGNPIDDKGPLETTERRLAEVKAPGIIPRKSVHEPLHTGIKALDGLVPIGRGQRELIIGDRQTGKTAVAIDTIINQKRTHETDSPVYCIYVAIGQKRSTVAQVVQTLEENGAMAYTTVVAATASDPAPMQFLSAYTGCAMGEYYRDNGMHALIVYDDLSKQATAYRQMSLILRRPPGREAYPGDVFYIHSRLLERAAKMNDEHGGGSLTALPIIETQDGDVSAYIPTNVISITDGQIFLETDLFYSGIRPAISVGLSVSRVGGSAQVKATKQVAGTLRLDLAQYREMAAFAQFGSDLDATTQKLLHRGKRLMELLKQAQYAPLSMEEQVVSIFAGTRGFLDVVDADAVVKAELELLKQMHAKHSDLLDTIRTSGKLDADTETKLGVAITAIIKEFLA</sequence>
<dbReference type="EC" id="7.1.2.2" evidence="1"/>
<dbReference type="EMBL" id="CP000471">
    <property type="protein sequence ID" value="ABK45945.1"/>
    <property type="molecule type" value="Genomic_DNA"/>
</dbReference>
<dbReference type="RefSeq" id="WP_011715001.1">
    <property type="nucleotide sequence ID" value="NC_008576.1"/>
</dbReference>
<dbReference type="SMR" id="A0LDA2"/>
<dbReference type="STRING" id="156889.Mmc1_3460"/>
<dbReference type="KEGG" id="mgm:Mmc1_3460"/>
<dbReference type="eggNOG" id="COG0056">
    <property type="taxonomic scope" value="Bacteria"/>
</dbReference>
<dbReference type="HOGENOM" id="CLU_010091_2_1_5"/>
<dbReference type="OrthoDB" id="9803053at2"/>
<dbReference type="Proteomes" id="UP000002586">
    <property type="component" value="Chromosome"/>
</dbReference>
<dbReference type="GO" id="GO:0005886">
    <property type="term" value="C:plasma membrane"/>
    <property type="evidence" value="ECO:0007669"/>
    <property type="project" value="UniProtKB-SubCell"/>
</dbReference>
<dbReference type="GO" id="GO:0045259">
    <property type="term" value="C:proton-transporting ATP synthase complex"/>
    <property type="evidence" value="ECO:0007669"/>
    <property type="project" value="UniProtKB-KW"/>
</dbReference>
<dbReference type="GO" id="GO:0043531">
    <property type="term" value="F:ADP binding"/>
    <property type="evidence" value="ECO:0007669"/>
    <property type="project" value="TreeGrafter"/>
</dbReference>
<dbReference type="GO" id="GO:0005524">
    <property type="term" value="F:ATP binding"/>
    <property type="evidence" value="ECO:0007669"/>
    <property type="project" value="UniProtKB-UniRule"/>
</dbReference>
<dbReference type="GO" id="GO:0046933">
    <property type="term" value="F:proton-transporting ATP synthase activity, rotational mechanism"/>
    <property type="evidence" value="ECO:0007669"/>
    <property type="project" value="UniProtKB-UniRule"/>
</dbReference>
<dbReference type="CDD" id="cd18113">
    <property type="entry name" value="ATP-synt_F1_alpha_C"/>
    <property type="match status" value="1"/>
</dbReference>
<dbReference type="CDD" id="cd18116">
    <property type="entry name" value="ATP-synt_F1_alpha_N"/>
    <property type="match status" value="1"/>
</dbReference>
<dbReference type="CDD" id="cd01132">
    <property type="entry name" value="F1-ATPase_alpha_CD"/>
    <property type="match status" value="1"/>
</dbReference>
<dbReference type="FunFam" id="1.20.150.20:FF:000001">
    <property type="entry name" value="ATP synthase subunit alpha"/>
    <property type="match status" value="1"/>
</dbReference>
<dbReference type="FunFam" id="2.40.30.20:FF:000001">
    <property type="entry name" value="ATP synthase subunit alpha"/>
    <property type="match status" value="1"/>
</dbReference>
<dbReference type="FunFam" id="3.40.50.300:FF:002432">
    <property type="entry name" value="ATP synthase subunit alpha, mitochondrial"/>
    <property type="match status" value="1"/>
</dbReference>
<dbReference type="Gene3D" id="2.40.30.20">
    <property type="match status" value="1"/>
</dbReference>
<dbReference type="Gene3D" id="1.20.150.20">
    <property type="entry name" value="ATP synthase alpha/beta chain, C-terminal domain"/>
    <property type="match status" value="1"/>
</dbReference>
<dbReference type="Gene3D" id="3.40.50.300">
    <property type="entry name" value="P-loop containing nucleotide triphosphate hydrolases"/>
    <property type="match status" value="1"/>
</dbReference>
<dbReference type="HAMAP" id="MF_01346">
    <property type="entry name" value="ATP_synth_alpha_bact"/>
    <property type="match status" value="1"/>
</dbReference>
<dbReference type="InterPro" id="IPR023366">
    <property type="entry name" value="ATP_synth_asu-like_sf"/>
</dbReference>
<dbReference type="InterPro" id="IPR000793">
    <property type="entry name" value="ATP_synth_asu_C"/>
</dbReference>
<dbReference type="InterPro" id="IPR038376">
    <property type="entry name" value="ATP_synth_asu_C_sf"/>
</dbReference>
<dbReference type="InterPro" id="IPR033732">
    <property type="entry name" value="ATP_synth_F1_a_nt-bd_dom"/>
</dbReference>
<dbReference type="InterPro" id="IPR005294">
    <property type="entry name" value="ATP_synth_F1_asu"/>
</dbReference>
<dbReference type="InterPro" id="IPR004100">
    <property type="entry name" value="ATPase_F1/V1/A1_a/bsu_N"/>
</dbReference>
<dbReference type="InterPro" id="IPR036121">
    <property type="entry name" value="ATPase_F1/V1/A1_a/bsu_N_sf"/>
</dbReference>
<dbReference type="InterPro" id="IPR000194">
    <property type="entry name" value="ATPase_F1/V1/A1_a/bsu_nucl-bd"/>
</dbReference>
<dbReference type="InterPro" id="IPR027417">
    <property type="entry name" value="P-loop_NTPase"/>
</dbReference>
<dbReference type="NCBIfam" id="TIGR00962">
    <property type="entry name" value="atpA"/>
    <property type="match status" value="1"/>
</dbReference>
<dbReference type="NCBIfam" id="NF009884">
    <property type="entry name" value="PRK13343.1"/>
    <property type="match status" value="1"/>
</dbReference>
<dbReference type="PANTHER" id="PTHR48082">
    <property type="entry name" value="ATP SYNTHASE SUBUNIT ALPHA, MITOCHONDRIAL"/>
    <property type="match status" value="1"/>
</dbReference>
<dbReference type="PANTHER" id="PTHR48082:SF2">
    <property type="entry name" value="ATP SYNTHASE SUBUNIT ALPHA, MITOCHONDRIAL"/>
    <property type="match status" value="1"/>
</dbReference>
<dbReference type="Pfam" id="PF00006">
    <property type="entry name" value="ATP-synt_ab"/>
    <property type="match status" value="1"/>
</dbReference>
<dbReference type="Pfam" id="PF00306">
    <property type="entry name" value="ATP-synt_ab_C"/>
    <property type="match status" value="1"/>
</dbReference>
<dbReference type="Pfam" id="PF02874">
    <property type="entry name" value="ATP-synt_ab_N"/>
    <property type="match status" value="1"/>
</dbReference>
<dbReference type="PIRSF" id="PIRSF039088">
    <property type="entry name" value="F_ATPase_subunit_alpha"/>
    <property type="match status" value="1"/>
</dbReference>
<dbReference type="SUPFAM" id="SSF47917">
    <property type="entry name" value="C-terminal domain of alpha and beta subunits of F1 ATP synthase"/>
    <property type="match status" value="1"/>
</dbReference>
<dbReference type="SUPFAM" id="SSF50615">
    <property type="entry name" value="N-terminal domain of alpha and beta subunits of F1 ATP synthase"/>
    <property type="match status" value="1"/>
</dbReference>
<dbReference type="SUPFAM" id="SSF52540">
    <property type="entry name" value="P-loop containing nucleoside triphosphate hydrolases"/>
    <property type="match status" value="1"/>
</dbReference>
<proteinExistence type="inferred from homology"/>
<organism>
    <name type="scientific">Magnetococcus marinus (strain ATCC BAA-1437 / JCM 17883 / MC-1)</name>
    <dbReference type="NCBI Taxonomy" id="156889"/>
    <lineage>
        <taxon>Bacteria</taxon>
        <taxon>Pseudomonadati</taxon>
        <taxon>Pseudomonadota</taxon>
        <taxon>Alphaproteobacteria</taxon>
        <taxon>Magnetococcales</taxon>
        <taxon>Magnetococcaceae</taxon>
        <taxon>Magnetococcus</taxon>
    </lineage>
</organism>
<reference key="1">
    <citation type="journal article" date="2009" name="Appl. Environ. Microbiol.">
        <title>Complete genome sequence of the chemolithoautotrophic marine magnetotactic coccus strain MC-1.</title>
        <authorList>
            <person name="Schubbe S."/>
            <person name="Williams T.J."/>
            <person name="Xie G."/>
            <person name="Kiss H.E."/>
            <person name="Brettin T.S."/>
            <person name="Martinez D."/>
            <person name="Ross C.A."/>
            <person name="Schuler D."/>
            <person name="Cox B.L."/>
            <person name="Nealson K.H."/>
            <person name="Bazylinski D.A."/>
        </authorList>
    </citation>
    <scope>NUCLEOTIDE SEQUENCE [LARGE SCALE GENOMIC DNA]</scope>
    <source>
        <strain>ATCC BAA-1437 / JCM 17883 / MC-1</strain>
    </source>
</reference>
<evidence type="ECO:0000255" key="1">
    <source>
        <dbReference type="HAMAP-Rule" id="MF_01346"/>
    </source>
</evidence>
<feature type="chain" id="PRO_0000302663" description="ATP synthase subunit alpha">
    <location>
        <begin position="1"/>
        <end position="507"/>
    </location>
</feature>
<feature type="binding site" evidence="1">
    <location>
        <begin position="169"/>
        <end position="176"/>
    </location>
    <ligand>
        <name>ATP</name>
        <dbReference type="ChEBI" id="CHEBI:30616"/>
    </ligand>
</feature>
<feature type="site" description="Required for activity" evidence="1">
    <location>
        <position position="367"/>
    </location>
</feature>